<gene>
    <name evidence="1" type="primary">deoC</name>
    <name type="ordered locus">SPJ_0780</name>
</gene>
<accession>C1CDJ0</accession>
<keyword id="KW-0963">Cytoplasm</keyword>
<keyword id="KW-0456">Lyase</keyword>
<keyword id="KW-0704">Schiff base</keyword>
<feature type="chain" id="PRO_1000189836" description="Deoxyribose-phosphate aldolase">
    <location>
        <begin position="1"/>
        <end position="220"/>
    </location>
</feature>
<feature type="active site" description="Proton donor/acceptor" evidence="1">
    <location>
        <position position="89"/>
    </location>
</feature>
<feature type="active site" description="Schiff-base intermediate with acetaldehyde" evidence="1">
    <location>
        <position position="151"/>
    </location>
</feature>
<feature type="active site" description="Proton donor/acceptor" evidence="1">
    <location>
        <position position="180"/>
    </location>
</feature>
<reference key="1">
    <citation type="journal article" date="2010" name="Genome Biol.">
        <title>Structure and dynamics of the pan-genome of Streptococcus pneumoniae and closely related species.</title>
        <authorList>
            <person name="Donati C."/>
            <person name="Hiller N.L."/>
            <person name="Tettelin H."/>
            <person name="Muzzi A."/>
            <person name="Croucher N.J."/>
            <person name="Angiuoli S.V."/>
            <person name="Oggioni M."/>
            <person name="Dunning Hotopp J.C."/>
            <person name="Hu F.Z."/>
            <person name="Riley D.R."/>
            <person name="Covacci A."/>
            <person name="Mitchell T.J."/>
            <person name="Bentley S.D."/>
            <person name="Kilian M."/>
            <person name="Ehrlich G.D."/>
            <person name="Rappuoli R."/>
            <person name="Moxon E.R."/>
            <person name="Masignani V."/>
        </authorList>
    </citation>
    <scope>NUCLEOTIDE SEQUENCE [LARGE SCALE GENOMIC DNA]</scope>
    <source>
        <strain>JJA</strain>
    </source>
</reference>
<evidence type="ECO:0000255" key="1">
    <source>
        <dbReference type="HAMAP-Rule" id="MF_00114"/>
    </source>
</evidence>
<proteinExistence type="inferred from homology"/>
<comment type="function">
    <text evidence="1">Catalyzes a reversible aldol reaction between acetaldehyde and D-glyceraldehyde 3-phosphate to generate 2-deoxy-D-ribose 5-phosphate.</text>
</comment>
<comment type="catalytic activity">
    <reaction evidence="1">
        <text>2-deoxy-D-ribose 5-phosphate = D-glyceraldehyde 3-phosphate + acetaldehyde</text>
        <dbReference type="Rhea" id="RHEA:12821"/>
        <dbReference type="ChEBI" id="CHEBI:15343"/>
        <dbReference type="ChEBI" id="CHEBI:59776"/>
        <dbReference type="ChEBI" id="CHEBI:62877"/>
        <dbReference type="EC" id="4.1.2.4"/>
    </reaction>
</comment>
<comment type="pathway">
    <text evidence="1">Carbohydrate degradation; 2-deoxy-D-ribose 1-phosphate degradation; D-glyceraldehyde 3-phosphate and acetaldehyde from 2-deoxy-alpha-D-ribose 1-phosphate: step 2/2.</text>
</comment>
<comment type="subcellular location">
    <subcellularLocation>
        <location evidence="1">Cytoplasm</location>
    </subcellularLocation>
</comment>
<comment type="similarity">
    <text evidence="1">Belongs to the DeoC/FbaB aldolase family. DeoC type 1 subfamily.</text>
</comment>
<organism>
    <name type="scientific">Streptococcus pneumoniae (strain JJA)</name>
    <dbReference type="NCBI Taxonomy" id="488222"/>
    <lineage>
        <taxon>Bacteria</taxon>
        <taxon>Bacillati</taxon>
        <taxon>Bacillota</taxon>
        <taxon>Bacilli</taxon>
        <taxon>Lactobacillales</taxon>
        <taxon>Streptococcaceae</taxon>
        <taxon>Streptococcus</taxon>
    </lineage>
</organism>
<sequence length="220" mass="23058">MKLNKYIDHTLLKQDAKKKQIDSLLSEAREYGFASVCVNPTWVEHAKKGLEGTDVKVCTVVGFPLGATTSTVKAFETKEAIQNGADEIDMVINVGALKSGDLALVESDIRAVVEASGDKLVKVIIEACLLTDQEKVLACQLAQKAGADFVKTSTGFSTGGATIADVRLMRETVGPDMGVKAAGGARSYADALTFVEAGATRIGTSAGVAILKGELADGDY</sequence>
<name>DEOC_STRZJ</name>
<protein>
    <recommendedName>
        <fullName evidence="1">Deoxyribose-phosphate aldolase</fullName>
        <shortName evidence="1">DERA</shortName>
        <ecNumber evidence="1">4.1.2.4</ecNumber>
    </recommendedName>
    <alternativeName>
        <fullName evidence="1">2-deoxy-D-ribose 5-phosphate aldolase</fullName>
    </alternativeName>
    <alternativeName>
        <fullName evidence="1">Phosphodeoxyriboaldolase</fullName>
        <shortName evidence="1">Deoxyriboaldolase</shortName>
    </alternativeName>
</protein>
<dbReference type="EC" id="4.1.2.4" evidence="1"/>
<dbReference type="EMBL" id="CP000919">
    <property type="protein sequence ID" value="ACO18246.1"/>
    <property type="molecule type" value="Genomic_DNA"/>
</dbReference>
<dbReference type="RefSeq" id="WP_000773688.1">
    <property type="nucleotide sequence ID" value="NC_012466.1"/>
</dbReference>
<dbReference type="SMR" id="C1CDJ0"/>
<dbReference type="KEGG" id="sjj:SPJ_0780"/>
<dbReference type="HOGENOM" id="CLU_053595_0_1_9"/>
<dbReference type="UniPathway" id="UPA00002">
    <property type="reaction ID" value="UER00468"/>
</dbReference>
<dbReference type="Proteomes" id="UP000002206">
    <property type="component" value="Chromosome"/>
</dbReference>
<dbReference type="GO" id="GO:0005737">
    <property type="term" value="C:cytoplasm"/>
    <property type="evidence" value="ECO:0007669"/>
    <property type="project" value="UniProtKB-SubCell"/>
</dbReference>
<dbReference type="GO" id="GO:0004139">
    <property type="term" value="F:deoxyribose-phosphate aldolase activity"/>
    <property type="evidence" value="ECO:0007669"/>
    <property type="project" value="UniProtKB-UniRule"/>
</dbReference>
<dbReference type="GO" id="GO:0006018">
    <property type="term" value="P:2-deoxyribose 1-phosphate catabolic process"/>
    <property type="evidence" value="ECO:0007669"/>
    <property type="project" value="UniProtKB-UniRule"/>
</dbReference>
<dbReference type="GO" id="GO:0016052">
    <property type="term" value="P:carbohydrate catabolic process"/>
    <property type="evidence" value="ECO:0007669"/>
    <property type="project" value="TreeGrafter"/>
</dbReference>
<dbReference type="GO" id="GO:0009264">
    <property type="term" value="P:deoxyribonucleotide catabolic process"/>
    <property type="evidence" value="ECO:0007669"/>
    <property type="project" value="InterPro"/>
</dbReference>
<dbReference type="CDD" id="cd00959">
    <property type="entry name" value="DeoC"/>
    <property type="match status" value="1"/>
</dbReference>
<dbReference type="FunFam" id="3.20.20.70:FF:000044">
    <property type="entry name" value="Deoxyribose-phosphate aldolase"/>
    <property type="match status" value="1"/>
</dbReference>
<dbReference type="Gene3D" id="3.20.20.70">
    <property type="entry name" value="Aldolase class I"/>
    <property type="match status" value="1"/>
</dbReference>
<dbReference type="HAMAP" id="MF_00114">
    <property type="entry name" value="DeoC_type1"/>
    <property type="match status" value="1"/>
</dbReference>
<dbReference type="InterPro" id="IPR013785">
    <property type="entry name" value="Aldolase_TIM"/>
</dbReference>
<dbReference type="InterPro" id="IPR011343">
    <property type="entry name" value="DeoC"/>
</dbReference>
<dbReference type="InterPro" id="IPR002915">
    <property type="entry name" value="DeoC/FbaB/LacD_aldolase"/>
</dbReference>
<dbReference type="InterPro" id="IPR028581">
    <property type="entry name" value="DeoC_typeI"/>
</dbReference>
<dbReference type="NCBIfam" id="TIGR00126">
    <property type="entry name" value="deoC"/>
    <property type="match status" value="1"/>
</dbReference>
<dbReference type="PANTHER" id="PTHR10889">
    <property type="entry name" value="DEOXYRIBOSE-PHOSPHATE ALDOLASE"/>
    <property type="match status" value="1"/>
</dbReference>
<dbReference type="PANTHER" id="PTHR10889:SF1">
    <property type="entry name" value="DEOXYRIBOSE-PHOSPHATE ALDOLASE"/>
    <property type="match status" value="1"/>
</dbReference>
<dbReference type="Pfam" id="PF01791">
    <property type="entry name" value="DeoC"/>
    <property type="match status" value="1"/>
</dbReference>
<dbReference type="PIRSF" id="PIRSF001357">
    <property type="entry name" value="DeoC"/>
    <property type="match status" value="1"/>
</dbReference>
<dbReference type="SMART" id="SM01133">
    <property type="entry name" value="DeoC"/>
    <property type="match status" value="1"/>
</dbReference>
<dbReference type="SUPFAM" id="SSF51569">
    <property type="entry name" value="Aldolase"/>
    <property type="match status" value="1"/>
</dbReference>